<dbReference type="EMBL" id="AE016826">
    <property type="protein sequence ID" value="AAO26906.1"/>
    <property type="molecule type" value="Genomic_DNA"/>
</dbReference>
<dbReference type="RefSeq" id="WP_011091307.1">
    <property type="nucleotide sequence ID" value="NC_004545.1"/>
</dbReference>
<dbReference type="SMR" id="Q89AS0"/>
<dbReference type="STRING" id="224915.bbp_173"/>
<dbReference type="KEGG" id="bab:bbp_173"/>
<dbReference type="eggNOG" id="COG0576">
    <property type="taxonomic scope" value="Bacteria"/>
</dbReference>
<dbReference type="HOGENOM" id="CLU_057217_6_0_6"/>
<dbReference type="OrthoDB" id="9789811at2"/>
<dbReference type="Proteomes" id="UP000000601">
    <property type="component" value="Chromosome"/>
</dbReference>
<dbReference type="GO" id="GO:0005737">
    <property type="term" value="C:cytoplasm"/>
    <property type="evidence" value="ECO:0007669"/>
    <property type="project" value="UniProtKB-SubCell"/>
</dbReference>
<dbReference type="GO" id="GO:0000774">
    <property type="term" value="F:adenyl-nucleotide exchange factor activity"/>
    <property type="evidence" value="ECO:0007669"/>
    <property type="project" value="InterPro"/>
</dbReference>
<dbReference type="GO" id="GO:0042803">
    <property type="term" value="F:protein homodimerization activity"/>
    <property type="evidence" value="ECO:0007669"/>
    <property type="project" value="InterPro"/>
</dbReference>
<dbReference type="GO" id="GO:0051087">
    <property type="term" value="F:protein-folding chaperone binding"/>
    <property type="evidence" value="ECO:0007669"/>
    <property type="project" value="InterPro"/>
</dbReference>
<dbReference type="GO" id="GO:0051082">
    <property type="term" value="F:unfolded protein binding"/>
    <property type="evidence" value="ECO:0007669"/>
    <property type="project" value="TreeGrafter"/>
</dbReference>
<dbReference type="GO" id="GO:0006457">
    <property type="term" value="P:protein folding"/>
    <property type="evidence" value="ECO:0007669"/>
    <property type="project" value="InterPro"/>
</dbReference>
<dbReference type="CDD" id="cd00446">
    <property type="entry name" value="GrpE"/>
    <property type="match status" value="1"/>
</dbReference>
<dbReference type="Gene3D" id="3.90.20.20">
    <property type="match status" value="1"/>
</dbReference>
<dbReference type="Gene3D" id="2.30.22.10">
    <property type="entry name" value="Head domain of nucleotide exchange factor GrpE"/>
    <property type="match status" value="1"/>
</dbReference>
<dbReference type="HAMAP" id="MF_01151">
    <property type="entry name" value="GrpE"/>
    <property type="match status" value="1"/>
</dbReference>
<dbReference type="InterPro" id="IPR000740">
    <property type="entry name" value="GrpE"/>
</dbReference>
<dbReference type="InterPro" id="IPR013805">
    <property type="entry name" value="GrpE_coiled_coil"/>
</dbReference>
<dbReference type="InterPro" id="IPR009012">
    <property type="entry name" value="GrpE_head"/>
</dbReference>
<dbReference type="PANTHER" id="PTHR21237">
    <property type="entry name" value="GRPE PROTEIN"/>
    <property type="match status" value="1"/>
</dbReference>
<dbReference type="PANTHER" id="PTHR21237:SF23">
    <property type="entry name" value="GRPE PROTEIN HOMOLOG, MITOCHONDRIAL"/>
    <property type="match status" value="1"/>
</dbReference>
<dbReference type="Pfam" id="PF01025">
    <property type="entry name" value="GrpE"/>
    <property type="match status" value="1"/>
</dbReference>
<dbReference type="PRINTS" id="PR00773">
    <property type="entry name" value="GRPEPROTEIN"/>
</dbReference>
<dbReference type="SUPFAM" id="SSF58014">
    <property type="entry name" value="Coiled-coil domain of nucleotide exchange factor GrpE"/>
    <property type="match status" value="1"/>
</dbReference>
<dbReference type="SUPFAM" id="SSF51064">
    <property type="entry name" value="Head domain of nucleotide exchange factor GrpE"/>
    <property type="match status" value="1"/>
</dbReference>
<accession>Q89AS0</accession>
<gene>
    <name evidence="1" type="primary">grpE2</name>
    <name type="ordered locus">bbp_173</name>
</gene>
<feature type="chain" id="PRO_0000113762" description="Protein GrpE 2">
    <location>
        <begin position="1"/>
        <end position="194"/>
    </location>
</feature>
<feature type="region of interest" description="Disordered" evidence="2">
    <location>
        <begin position="1"/>
        <end position="29"/>
    </location>
</feature>
<feature type="compositionally biased region" description="Basic and acidic residues" evidence="2">
    <location>
        <begin position="1"/>
        <end position="17"/>
    </location>
</feature>
<feature type="compositionally biased region" description="Polar residues" evidence="2">
    <location>
        <begin position="18"/>
        <end position="29"/>
    </location>
</feature>
<keyword id="KW-0143">Chaperone</keyword>
<keyword id="KW-0963">Cytoplasm</keyword>
<keyword id="KW-1185">Reference proteome</keyword>
<keyword id="KW-0346">Stress response</keyword>
<sequence length="194" mass="22689">MNDIDKHKKETQTESKNDLNNTTITQNNVSDDCQNQDKINSLKQKILEIKKHISEVKLREQAEIENINKNTKNKIKIIIDTQLENFFRNLIPIIDSLKNIRKDINKYNNIKDNNMIQGIPLILKSLLTVTEKFGLKINNKKGKLFDPKLHTTIPNENCKNINEYYVSEIIQDGYTFHEKIIRKAIVKLSKDKKT</sequence>
<evidence type="ECO:0000255" key="1">
    <source>
        <dbReference type="HAMAP-Rule" id="MF_01151"/>
    </source>
</evidence>
<evidence type="ECO:0000256" key="2">
    <source>
        <dbReference type="SAM" id="MobiDB-lite"/>
    </source>
</evidence>
<reference key="1">
    <citation type="journal article" date="2003" name="Proc. Natl. Acad. Sci. U.S.A.">
        <title>Reductive genome evolution in Buchnera aphidicola.</title>
        <authorList>
            <person name="van Ham R.C.H.J."/>
            <person name="Kamerbeek J."/>
            <person name="Palacios C."/>
            <person name="Rausell C."/>
            <person name="Abascal F."/>
            <person name="Bastolla U."/>
            <person name="Fernandez J.M."/>
            <person name="Jimenez L."/>
            <person name="Postigo M."/>
            <person name="Silva F.J."/>
            <person name="Tamames J."/>
            <person name="Viguera E."/>
            <person name="Latorre A."/>
            <person name="Valencia A."/>
            <person name="Moran F."/>
            <person name="Moya A."/>
        </authorList>
    </citation>
    <scope>NUCLEOTIDE SEQUENCE [LARGE SCALE GENOMIC DNA]</scope>
    <source>
        <strain>Bp</strain>
    </source>
</reference>
<comment type="function">
    <text evidence="1">Participates actively in the response to hyperosmotic and heat shock by preventing the aggregation of stress-denatured proteins, in association with DnaK and GrpE. It is the nucleotide exchange factor for DnaK and may function as a thermosensor. Unfolded proteins bind initially to DnaJ; upon interaction with the DnaJ-bound protein, DnaK hydrolyzes its bound ATP, resulting in the formation of a stable complex. GrpE releases ADP from DnaK; ATP binding to DnaK triggers the release of the substrate protein, thus completing the reaction cycle. Several rounds of ATP-dependent interactions between DnaJ, DnaK and GrpE are required for fully efficient folding.</text>
</comment>
<comment type="subunit">
    <text evidence="1">Homodimer.</text>
</comment>
<comment type="subcellular location">
    <subcellularLocation>
        <location evidence="1">Cytoplasm</location>
    </subcellularLocation>
</comment>
<comment type="similarity">
    <text evidence="1">Belongs to the GrpE family.</text>
</comment>
<protein>
    <recommendedName>
        <fullName evidence="1">Protein GrpE 2</fullName>
    </recommendedName>
    <alternativeName>
        <fullName evidence="1">HSP-70 cofactor 2</fullName>
    </alternativeName>
</protein>
<name>GRPE2_BUCBP</name>
<organism>
    <name type="scientific">Buchnera aphidicola subsp. Baizongia pistaciae (strain Bp)</name>
    <dbReference type="NCBI Taxonomy" id="224915"/>
    <lineage>
        <taxon>Bacteria</taxon>
        <taxon>Pseudomonadati</taxon>
        <taxon>Pseudomonadota</taxon>
        <taxon>Gammaproteobacteria</taxon>
        <taxon>Enterobacterales</taxon>
        <taxon>Erwiniaceae</taxon>
        <taxon>Buchnera</taxon>
    </lineage>
</organism>
<proteinExistence type="inferred from homology"/>